<keyword id="KW-0002">3D-structure</keyword>
<keyword id="KW-0106">Calcium</keyword>
<keyword id="KW-0903">Direct protein sequencing</keyword>
<keyword id="KW-1015">Disulfide bond</keyword>
<keyword id="KW-0479">Metal-binding</keyword>
<keyword id="KW-0485">Methanol utilization</keyword>
<keyword id="KW-0560">Oxidoreductase</keyword>
<keyword id="KW-0574">Periplasm</keyword>
<keyword id="KW-0634">PQQ</keyword>
<keyword id="KW-0732">Signal</keyword>
<feature type="signal peptide" evidence="3">
    <location>
        <begin position="1"/>
        <end position="32"/>
    </location>
</feature>
<feature type="chain" id="PRO_0000025568" description="Methanol dehydrogenase [cytochrome c] subunit 1">
    <location>
        <begin position="33"/>
        <end position="631"/>
    </location>
</feature>
<feature type="active site" description="Proton acceptor">
    <location>
        <position position="335"/>
    </location>
</feature>
<feature type="binding site">
    <location>
        <position position="209"/>
    </location>
    <ligand>
        <name>Ca(2+)</name>
        <dbReference type="ChEBI" id="CHEBI:29108"/>
    </ligand>
</feature>
<feature type="binding site">
    <location>
        <position position="293"/>
    </location>
    <ligand>
        <name>Ca(2+)</name>
        <dbReference type="ChEBI" id="CHEBI:29108"/>
    </ligand>
</feature>
<feature type="disulfide bond" evidence="2">
    <location>
        <begin position="135"/>
        <end position="136"/>
    </location>
</feature>
<feature type="disulfide bond" evidence="2">
    <location>
        <begin position="418"/>
        <end position="447"/>
    </location>
</feature>
<feature type="helix" evidence="5">
    <location>
        <begin position="34"/>
        <end position="40"/>
    </location>
</feature>
<feature type="turn" evidence="5">
    <location>
        <begin position="66"/>
        <end position="68"/>
    </location>
</feature>
<feature type="helix" evidence="5">
    <location>
        <begin position="69"/>
        <end position="71"/>
    </location>
</feature>
<feature type="strand" evidence="5">
    <location>
        <begin position="72"/>
        <end position="79"/>
    </location>
</feature>
<feature type="strand" evidence="5">
    <location>
        <begin position="91"/>
        <end position="93"/>
    </location>
</feature>
<feature type="strand" evidence="5">
    <location>
        <begin position="96"/>
        <end position="99"/>
    </location>
</feature>
<feature type="turn" evidence="5">
    <location>
        <begin position="103"/>
        <end position="105"/>
    </location>
</feature>
<feature type="strand" evidence="5">
    <location>
        <begin position="107"/>
        <end position="111"/>
    </location>
</feature>
<feature type="strand" evidence="5">
    <location>
        <begin position="117"/>
        <end position="122"/>
    </location>
</feature>
<feature type="helix" evidence="5">
    <location>
        <begin position="128"/>
        <end position="133"/>
    </location>
</feature>
<feature type="strand" evidence="5">
    <location>
        <begin position="144"/>
        <end position="146"/>
    </location>
</feature>
<feature type="strand" evidence="5">
    <location>
        <begin position="150"/>
        <end position="152"/>
    </location>
</feature>
<feature type="strand" evidence="5">
    <location>
        <begin position="155"/>
        <end position="159"/>
    </location>
</feature>
<feature type="strand" evidence="5">
    <location>
        <begin position="163"/>
        <end position="169"/>
    </location>
</feature>
<feature type="turn" evidence="5">
    <location>
        <begin position="170"/>
        <end position="172"/>
    </location>
</feature>
<feature type="strand" evidence="5">
    <location>
        <begin position="175"/>
        <end position="180"/>
    </location>
</feature>
<feature type="helix" evidence="5">
    <location>
        <begin position="184"/>
        <end position="186"/>
    </location>
</feature>
<feature type="strand" evidence="5">
    <location>
        <begin position="195"/>
        <end position="197"/>
    </location>
</feature>
<feature type="strand" evidence="5">
    <location>
        <begin position="200"/>
        <end position="203"/>
    </location>
</feature>
<feature type="helix" evidence="5">
    <location>
        <begin position="208"/>
        <end position="210"/>
    </location>
</feature>
<feature type="strand" evidence="5">
    <location>
        <begin position="215"/>
        <end position="220"/>
    </location>
</feature>
<feature type="turn" evidence="5">
    <location>
        <begin position="221"/>
        <end position="223"/>
    </location>
</feature>
<feature type="strand" evidence="5">
    <location>
        <begin position="226"/>
        <end position="234"/>
    </location>
</feature>
<feature type="helix" evidence="5">
    <location>
        <begin position="236"/>
        <end position="239"/>
    </location>
</feature>
<feature type="turn" evidence="5">
    <location>
        <begin position="243"/>
        <end position="246"/>
    </location>
</feature>
<feature type="helix" evidence="5">
    <location>
        <begin position="250"/>
        <end position="252"/>
    </location>
</feature>
<feature type="helix" evidence="5">
    <location>
        <begin position="257"/>
        <end position="260"/>
    </location>
</feature>
<feature type="helix" evidence="5">
    <location>
        <begin position="266"/>
        <end position="269"/>
    </location>
</feature>
<feature type="strand" evidence="5">
    <location>
        <begin position="279"/>
        <end position="281"/>
    </location>
</feature>
<feature type="turn" evidence="5">
    <location>
        <begin position="282"/>
        <end position="285"/>
    </location>
</feature>
<feature type="strand" evidence="5">
    <location>
        <begin position="286"/>
        <end position="290"/>
    </location>
</feature>
<feature type="helix" evidence="5">
    <location>
        <begin position="299"/>
        <end position="301"/>
    </location>
</feature>
<feature type="turn" evidence="5">
    <location>
        <begin position="307"/>
        <end position="310"/>
    </location>
</feature>
<feature type="strand" evidence="5">
    <location>
        <begin position="311"/>
        <end position="316"/>
    </location>
</feature>
<feature type="turn" evidence="5">
    <location>
        <begin position="317"/>
        <end position="319"/>
    </location>
</feature>
<feature type="strand" evidence="5">
    <location>
        <begin position="322"/>
        <end position="329"/>
    </location>
</feature>
<feature type="strand" evidence="5">
    <location>
        <begin position="343"/>
        <end position="348"/>
    </location>
</feature>
<feature type="strand" evidence="5">
    <location>
        <begin position="354"/>
        <end position="361"/>
    </location>
</feature>
<feature type="strand" evidence="5">
    <location>
        <begin position="365"/>
        <end position="371"/>
    </location>
</feature>
<feature type="turn" evidence="5">
    <location>
        <begin position="372"/>
        <end position="374"/>
    </location>
</feature>
<feature type="strand" evidence="5">
    <location>
        <begin position="377"/>
        <end position="384"/>
    </location>
</feature>
<feature type="strand" evidence="5">
    <location>
        <begin position="389"/>
        <end position="393"/>
    </location>
</feature>
<feature type="turn" evidence="5">
    <location>
        <begin position="395"/>
        <end position="397"/>
    </location>
</feature>
<feature type="strand" evidence="5">
    <location>
        <begin position="400"/>
        <end position="402"/>
    </location>
</feature>
<feature type="helix" evidence="5">
    <location>
        <begin position="404"/>
        <end position="406"/>
    </location>
</feature>
<feature type="strand" evidence="5">
    <location>
        <begin position="414"/>
        <end position="419"/>
    </location>
</feature>
<feature type="strand" evidence="5">
    <location>
        <begin position="431"/>
        <end position="433"/>
    </location>
</feature>
<feature type="turn" evidence="5">
    <location>
        <begin position="434"/>
        <end position="437"/>
    </location>
</feature>
<feature type="strand" evidence="5">
    <location>
        <begin position="438"/>
        <end position="444"/>
    </location>
</feature>
<feature type="strand" evidence="5">
    <location>
        <begin position="446"/>
        <end position="452"/>
    </location>
</feature>
<feature type="strand" evidence="5">
    <location>
        <begin position="466"/>
        <end position="472"/>
    </location>
</feature>
<feature type="turn" evidence="5">
    <location>
        <begin position="478"/>
        <end position="481"/>
    </location>
</feature>
<feature type="strand" evidence="5">
    <location>
        <begin position="484"/>
        <end position="490"/>
    </location>
</feature>
<feature type="turn" evidence="5">
    <location>
        <begin position="491"/>
        <end position="494"/>
    </location>
</feature>
<feature type="strand" evidence="5">
    <location>
        <begin position="495"/>
        <end position="504"/>
    </location>
</feature>
<feature type="strand" evidence="5">
    <location>
        <begin position="508"/>
        <end position="513"/>
    </location>
</feature>
<feature type="turn" evidence="5">
    <location>
        <begin position="514"/>
        <end position="516"/>
    </location>
</feature>
<feature type="strand" evidence="5">
    <location>
        <begin position="517"/>
        <end position="521"/>
    </location>
</feature>
<feature type="strand" evidence="5">
    <location>
        <begin position="525"/>
        <end position="531"/>
    </location>
</feature>
<feature type="turn" evidence="5">
    <location>
        <begin position="532"/>
        <end position="534"/>
    </location>
</feature>
<feature type="strand" evidence="5">
    <location>
        <begin position="537"/>
        <end position="542"/>
    </location>
</feature>
<feature type="strand" evidence="5">
    <location>
        <begin position="552"/>
        <end position="556"/>
    </location>
</feature>
<feature type="strand" evidence="5">
    <location>
        <begin position="559"/>
        <end position="566"/>
    </location>
</feature>
<feature type="helix" evidence="5">
    <location>
        <begin position="570"/>
        <end position="577"/>
    </location>
</feature>
<feature type="helix" evidence="5">
    <location>
        <begin position="585"/>
        <end position="592"/>
    </location>
</feature>
<feature type="turn" evidence="5">
    <location>
        <begin position="593"/>
        <end position="595"/>
    </location>
</feature>
<feature type="helix" evidence="5">
    <location>
        <begin position="596"/>
        <end position="598"/>
    </location>
</feature>
<feature type="strand" evidence="5">
    <location>
        <begin position="605"/>
        <end position="611"/>
    </location>
</feature>
<feature type="turn" evidence="5">
    <location>
        <begin position="620"/>
        <end position="623"/>
    </location>
</feature>
<feature type="strand" evidence="5">
    <location>
        <begin position="627"/>
        <end position="629"/>
    </location>
</feature>
<sequence length="631" mass="69799">MNRNTPKARGASSLAMAVAMGLAVLTTAPATANDQLVELAKDPANWVMTGRDYNAQNYSEMTDINKENVKQLRPAWSFSTGVLHGHEGTPLVVGDRMFIHTPFPNTTFALDLNEPGKILWQNKPKQNPTARTVACCDVVNRGLAYWPGDDQVKPLIFRTQLDGHIVAMDAETGETRWIMENSDIKVGSTLTIAPYVIKDLVLVGSSGAELGVRGYVTAYDVKSGEMRWRAFATGPDEELLLAEDFNAPNPHYGQKNLGLETWEGDAWKIGGGTNWGWYAYDPEVDLFYYGSGNPAPWNETMRPGDNKWTMAIWGREATTGEAKFAYQKTPHDEWDYAGVNVMMLSEQEDKQGQMRKLLTHPDRNGIVYTLDRTNGDLISADKMDDTVNWVKEVQLDTGLPVRDPEFGTRMDHKARDICPSAMGYHNQGHDSYDPERKVFMLGINHICMDWEPFMLPYRAGQFFVGATLTMYPGPKATAERAGAGQIKAYDAISGEMKWEKMERFSVWGGTMATAGGLTFYVTLDGFIKARDSDTGDLLWKFKLPSGVIGHPMTYKHDGRQYVAIMYGVGGWPGVGLVFDLADPTAGLGSVGAFKRLQEFTQMGGGVMVFSLDGESPYSDPNVGEYAPGEPT</sequence>
<name>DHM1_PARDE</name>
<organism>
    <name type="scientific">Paracoccus denitrificans</name>
    <dbReference type="NCBI Taxonomy" id="266"/>
    <lineage>
        <taxon>Bacteria</taxon>
        <taxon>Pseudomonadati</taxon>
        <taxon>Pseudomonadota</taxon>
        <taxon>Alphaproteobacteria</taxon>
        <taxon>Rhodobacterales</taxon>
        <taxon>Paracoccaceae</taxon>
        <taxon>Paracoccus</taxon>
    </lineage>
</organism>
<protein>
    <recommendedName>
        <fullName>Methanol dehydrogenase [cytochrome c] subunit 1</fullName>
        <ecNumber>1.1.2.7</ecNumber>
    </recommendedName>
    <alternativeName>
        <fullName>MDH large subunit alpha</fullName>
    </alternativeName>
    <alternativeName>
        <fullName>MEDH</fullName>
    </alternativeName>
</protein>
<gene>
    <name type="primary">moxF</name>
</gene>
<comment type="function">
    <text evidence="1">Catalyzes the oxidation of primary alcohols including methanol.</text>
</comment>
<comment type="catalytic activity">
    <reaction>
        <text>2 Fe(III)-[cytochrome cL] + a primary alcohol = 2 Fe(II)-[cytochrome cL] + an aldehyde + 2 H(+)</text>
        <dbReference type="Rhea" id="RHEA:51004"/>
        <dbReference type="Rhea" id="RHEA-COMP:12863"/>
        <dbReference type="Rhea" id="RHEA-COMP:12864"/>
        <dbReference type="ChEBI" id="CHEBI:15378"/>
        <dbReference type="ChEBI" id="CHEBI:15734"/>
        <dbReference type="ChEBI" id="CHEBI:17478"/>
        <dbReference type="ChEBI" id="CHEBI:29033"/>
        <dbReference type="ChEBI" id="CHEBI:29034"/>
        <dbReference type="EC" id="1.1.2.7"/>
    </reaction>
</comment>
<comment type="cofactor">
    <cofactor evidence="2">
        <name>pyrroloquinoline quinone</name>
        <dbReference type="ChEBI" id="CHEBI:58442"/>
    </cofactor>
    <text evidence="2">Binds 1 PQQ group per subunit. PQQ is inserted between disulfide Cys-135-Cys-136 and the indole ring of Trp-275.</text>
</comment>
<comment type="cofactor">
    <cofactor evidence="2">
        <name>Ca(2+)</name>
        <dbReference type="ChEBI" id="CHEBI:29108"/>
    </cofactor>
    <text evidence="2">Binds 1 Ca(2+) ion per subunit.</text>
</comment>
<comment type="subunit">
    <text evidence="2">Heterotetramer composed of 2 alpha and 2 beta subunits.</text>
</comment>
<comment type="subcellular location">
    <subcellularLocation>
        <location>Periplasm</location>
    </subcellularLocation>
</comment>
<comment type="miscellaneous">
    <text>MDH is the major protein in the cell during growth on methanol (in P.denitrificans MDH constitutes up to 15% of the total cell protein).</text>
</comment>
<comment type="similarity">
    <text evidence="4">Belongs to the bacterial PQQ dehydrogenase family.</text>
</comment>
<proteinExistence type="evidence at protein level"/>
<reference key="1">
    <citation type="journal article" date="1987" name="J. Bacteriol.">
        <title>Isolation and nucleotide sequence of the methanol dehydrogenase structural gene from Paracoccus denitrificans.</title>
        <authorList>
            <person name="Harms N."/>
            <person name="de Vries G.E."/>
            <person name="Maurer K."/>
            <person name="Hoogendijk J."/>
            <person name="Stouthamer A.H."/>
        </authorList>
    </citation>
    <scope>NUCLEOTIDE SEQUENCE [GENOMIC DNA]</scope>
    <scope>PROTEIN SEQUENCE OF 33-49</scope>
</reference>
<reference key="2">
    <citation type="journal article" date="2003" name="J. Biol. Inorg. Chem.">
        <title>X-ray structure of methanol dehydrogenase from Paracoccus denitrificans and molecular modeling of its interactions with cytochrome c-551i.</title>
        <authorList>
            <person name="Xia Z.-X."/>
            <person name="Dai W.W."/>
            <person name="He Y.-N."/>
            <person name="White S.A."/>
            <person name="Mathews F.S."/>
            <person name="Davidson V.L."/>
        </authorList>
    </citation>
    <scope>X-RAY CRYSTALLOGRAPHY (2.5 ANGSTROMS) OF 33-631 IN COMPLEX WITH BETA SUBUNIT</scope>
    <scope>SUBUNIT</scope>
    <scope>COFACTOR</scope>
    <scope>DISULFIDE BONDS</scope>
</reference>
<accession>P12293</accession>
<dbReference type="EC" id="1.1.2.7"/>
<dbReference type="EMBL" id="M17339">
    <property type="protein sequence ID" value="AAA88366.1"/>
    <property type="molecule type" value="Genomic_DNA"/>
</dbReference>
<dbReference type="PDB" id="1LRW">
    <property type="method" value="X-ray"/>
    <property type="resolution" value="2.50 A"/>
    <property type="chains" value="A/C=33-631"/>
</dbReference>
<dbReference type="PDBsum" id="1LRW"/>
<dbReference type="SMR" id="P12293"/>
<dbReference type="BioCyc" id="MetaCyc:MONOMER-3923"/>
<dbReference type="BRENDA" id="1.1.2.B2">
    <property type="organism ID" value="3341"/>
</dbReference>
<dbReference type="EvolutionaryTrace" id="P12293"/>
<dbReference type="GO" id="GO:0016020">
    <property type="term" value="C:membrane"/>
    <property type="evidence" value="ECO:0007669"/>
    <property type="project" value="InterPro"/>
</dbReference>
<dbReference type="GO" id="GO:0030288">
    <property type="term" value="C:outer membrane-bounded periplasmic space"/>
    <property type="evidence" value="ECO:0007669"/>
    <property type="project" value="InterPro"/>
</dbReference>
<dbReference type="GO" id="GO:0052933">
    <property type="term" value="F:alcohol dehydrogenase (cytochrome c(L)) activity"/>
    <property type="evidence" value="ECO:0007669"/>
    <property type="project" value="UniProtKB-EC"/>
</dbReference>
<dbReference type="GO" id="GO:0005509">
    <property type="term" value="F:calcium ion binding"/>
    <property type="evidence" value="ECO:0007669"/>
    <property type="project" value="InterPro"/>
</dbReference>
<dbReference type="GO" id="GO:0015945">
    <property type="term" value="P:methanol metabolic process"/>
    <property type="evidence" value="ECO:0007669"/>
    <property type="project" value="UniProtKB-KW"/>
</dbReference>
<dbReference type="CDD" id="cd10278">
    <property type="entry name" value="PQQ_MDH"/>
    <property type="match status" value="1"/>
</dbReference>
<dbReference type="FunFam" id="2.140.10.10:FF:000003">
    <property type="entry name" value="Methanol dehydrogenase, large subunit"/>
    <property type="match status" value="1"/>
</dbReference>
<dbReference type="Gene3D" id="2.140.10.10">
    <property type="entry name" value="Quinoprotein alcohol dehydrogenase-like superfamily"/>
    <property type="match status" value="1"/>
</dbReference>
<dbReference type="InterPro" id="IPR018391">
    <property type="entry name" value="PQQ_b-propeller_rpt"/>
</dbReference>
<dbReference type="InterPro" id="IPR017512">
    <property type="entry name" value="PQQ_MeOH/EtOH_DH"/>
</dbReference>
<dbReference type="InterPro" id="IPR002372">
    <property type="entry name" value="PQQ_rpt_dom"/>
</dbReference>
<dbReference type="InterPro" id="IPR011047">
    <property type="entry name" value="Quinoprotein_ADH-like_sf"/>
</dbReference>
<dbReference type="InterPro" id="IPR001479">
    <property type="entry name" value="Quinoprotein_DH_CS"/>
</dbReference>
<dbReference type="NCBIfam" id="TIGR03075">
    <property type="entry name" value="PQQ_enz_alc_DH"/>
    <property type="match status" value="1"/>
</dbReference>
<dbReference type="PANTHER" id="PTHR32303">
    <property type="entry name" value="QUINOPROTEIN ALCOHOL DEHYDROGENASE (CYTOCHROME C)"/>
    <property type="match status" value="1"/>
</dbReference>
<dbReference type="PANTHER" id="PTHR32303:SF4">
    <property type="entry name" value="QUINOPROTEIN GLUCOSE DEHYDROGENASE"/>
    <property type="match status" value="1"/>
</dbReference>
<dbReference type="Pfam" id="PF01011">
    <property type="entry name" value="PQQ"/>
    <property type="match status" value="2"/>
</dbReference>
<dbReference type="SMART" id="SM00564">
    <property type="entry name" value="PQQ"/>
    <property type="match status" value="4"/>
</dbReference>
<dbReference type="SUPFAM" id="SSF50998">
    <property type="entry name" value="Quinoprotein alcohol dehydrogenase-like"/>
    <property type="match status" value="1"/>
</dbReference>
<dbReference type="PROSITE" id="PS00363">
    <property type="entry name" value="BACTERIAL_PQQ_1"/>
    <property type="match status" value="1"/>
</dbReference>
<dbReference type="PROSITE" id="PS00364">
    <property type="entry name" value="BACTERIAL_PQQ_2"/>
    <property type="match status" value="1"/>
</dbReference>
<evidence type="ECO:0000250" key="1"/>
<evidence type="ECO:0000269" key="2">
    <source>
    </source>
</evidence>
<evidence type="ECO:0000269" key="3">
    <source>
    </source>
</evidence>
<evidence type="ECO:0000305" key="4"/>
<evidence type="ECO:0007829" key="5">
    <source>
        <dbReference type="PDB" id="1LRW"/>
    </source>
</evidence>